<keyword id="KW-0963">Cytoplasm</keyword>
<keyword id="KW-0238">DNA-binding</keyword>
<accession>B2V0W1</accession>
<name>Y3225_CLOBA</name>
<reference key="1">
    <citation type="submission" date="2008-05" db="EMBL/GenBank/DDBJ databases">
        <title>Complete genome sequence of Clostridium botulinum E3 str. Alaska E43.</title>
        <authorList>
            <person name="Brinkac L.M."/>
            <person name="Brown J.L."/>
            <person name="Bruce D."/>
            <person name="Detter C."/>
            <person name="Munk C."/>
            <person name="Smith L.A."/>
            <person name="Smith T.J."/>
            <person name="Sutton G."/>
            <person name="Brettin T.S."/>
        </authorList>
    </citation>
    <scope>NUCLEOTIDE SEQUENCE [LARGE SCALE GENOMIC DNA]</scope>
    <source>
        <strain>Alaska E43 / Type E3</strain>
    </source>
</reference>
<feature type="chain" id="PRO_1000114601" description="Nucleoid-associated protein CLH_3225">
    <location>
        <begin position="1"/>
        <end position="113"/>
    </location>
</feature>
<feature type="region of interest" description="Disordered" evidence="2">
    <location>
        <begin position="1"/>
        <end position="31"/>
    </location>
</feature>
<feature type="compositionally biased region" description="Gly residues" evidence="2">
    <location>
        <begin position="1"/>
        <end position="14"/>
    </location>
</feature>
<proteinExistence type="inferred from homology"/>
<dbReference type="EMBL" id="CP001078">
    <property type="protein sequence ID" value="ACD53306.1"/>
    <property type="molecule type" value="Genomic_DNA"/>
</dbReference>
<dbReference type="RefSeq" id="WP_004443240.1">
    <property type="nucleotide sequence ID" value="NC_010723.1"/>
</dbReference>
<dbReference type="SMR" id="B2V0W1"/>
<dbReference type="KEGG" id="cbt:CLH_3225"/>
<dbReference type="HOGENOM" id="CLU_140930_1_0_9"/>
<dbReference type="GO" id="GO:0043590">
    <property type="term" value="C:bacterial nucleoid"/>
    <property type="evidence" value="ECO:0007669"/>
    <property type="project" value="UniProtKB-UniRule"/>
</dbReference>
<dbReference type="GO" id="GO:0005829">
    <property type="term" value="C:cytosol"/>
    <property type="evidence" value="ECO:0007669"/>
    <property type="project" value="TreeGrafter"/>
</dbReference>
<dbReference type="GO" id="GO:0003677">
    <property type="term" value="F:DNA binding"/>
    <property type="evidence" value="ECO:0007669"/>
    <property type="project" value="UniProtKB-UniRule"/>
</dbReference>
<dbReference type="Gene3D" id="3.30.1310.10">
    <property type="entry name" value="Nucleoid-associated protein YbaB-like domain"/>
    <property type="match status" value="1"/>
</dbReference>
<dbReference type="HAMAP" id="MF_00274">
    <property type="entry name" value="DNA_YbaB_EbfC"/>
    <property type="match status" value="1"/>
</dbReference>
<dbReference type="InterPro" id="IPR036894">
    <property type="entry name" value="YbaB-like_sf"/>
</dbReference>
<dbReference type="InterPro" id="IPR004401">
    <property type="entry name" value="YbaB/EbfC"/>
</dbReference>
<dbReference type="NCBIfam" id="TIGR00103">
    <property type="entry name" value="DNA_YbaB_EbfC"/>
    <property type="match status" value="1"/>
</dbReference>
<dbReference type="PANTHER" id="PTHR33449">
    <property type="entry name" value="NUCLEOID-ASSOCIATED PROTEIN YBAB"/>
    <property type="match status" value="1"/>
</dbReference>
<dbReference type="PANTHER" id="PTHR33449:SF1">
    <property type="entry name" value="NUCLEOID-ASSOCIATED PROTEIN YBAB"/>
    <property type="match status" value="1"/>
</dbReference>
<dbReference type="Pfam" id="PF02575">
    <property type="entry name" value="YbaB_DNA_bd"/>
    <property type="match status" value="1"/>
</dbReference>
<dbReference type="PIRSF" id="PIRSF004555">
    <property type="entry name" value="UCP004555"/>
    <property type="match status" value="1"/>
</dbReference>
<dbReference type="SUPFAM" id="SSF82607">
    <property type="entry name" value="YbaB-like"/>
    <property type="match status" value="1"/>
</dbReference>
<sequence length="113" mass="12021">MAKGGFPGGFGGGNMNNLMKQAQKLQKQMEDMQKDLETKEFETSVGGGAVSVTVTGKKEVKSINIKPEVVDPDDVEMLEDLVLTAVNEALRKAEEETASKMGKLTGGMPGGLF</sequence>
<comment type="function">
    <text evidence="1">Binds to DNA and alters its conformation. May be involved in regulation of gene expression, nucleoid organization and DNA protection.</text>
</comment>
<comment type="subunit">
    <text evidence="1">Homodimer.</text>
</comment>
<comment type="subcellular location">
    <subcellularLocation>
        <location evidence="1">Cytoplasm</location>
        <location evidence="1">Nucleoid</location>
    </subcellularLocation>
</comment>
<comment type="similarity">
    <text evidence="1">Belongs to the YbaB/EbfC family.</text>
</comment>
<organism>
    <name type="scientific">Clostridium botulinum (strain Alaska E43 / Type E3)</name>
    <dbReference type="NCBI Taxonomy" id="508767"/>
    <lineage>
        <taxon>Bacteria</taxon>
        <taxon>Bacillati</taxon>
        <taxon>Bacillota</taxon>
        <taxon>Clostridia</taxon>
        <taxon>Eubacteriales</taxon>
        <taxon>Clostridiaceae</taxon>
        <taxon>Clostridium</taxon>
    </lineage>
</organism>
<protein>
    <recommendedName>
        <fullName evidence="1">Nucleoid-associated protein CLH_3225</fullName>
    </recommendedName>
</protein>
<evidence type="ECO:0000255" key="1">
    <source>
        <dbReference type="HAMAP-Rule" id="MF_00274"/>
    </source>
</evidence>
<evidence type="ECO:0000256" key="2">
    <source>
        <dbReference type="SAM" id="MobiDB-lite"/>
    </source>
</evidence>
<gene>
    <name type="ordered locus">CLH_3225</name>
</gene>